<proteinExistence type="evidence at protein level"/>
<accession>O65674</accession>
<organism>
    <name type="scientific">Arabidopsis thaliana</name>
    <name type="common">Mouse-ear cress</name>
    <dbReference type="NCBI Taxonomy" id="3702"/>
    <lineage>
        <taxon>Eukaryota</taxon>
        <taxon>Viridiplantae</taxon>
        <taxon>Streptophyta</taxon>
        <taxon>Embryophyta</taxon>
        <taxon>Tracheophyta</taxon>
        <taxon>Spermatophyta</taxon>
        <taxon>Magnoliopsida</taxon>
        <taxon>eudicotyledons</taxon>
        <taxon>Gunneridae</taxon>
        <taxon>Pentapetalae</taxon>
        <taxon>rosids</taxon>
        <taxon>malvids</taxon>
        <taxon>Brassicales</taxon>
        <taxon>Brassicaceae</taxon>
        <taxon>Camelineae</taxon>
        <taxon>Arabidopsis</taxon>
    </lineage>
</organism>
<protein>
    <recommendedName>
        <fullName>SKP1-like protein 12</fullName>
        <shortName>AtSK12</shortName>
    </recommendedName>
</protein>
<reference key="1">
    <citation type="journal article" date="1999" name="Nature">
        <title>Sequence and analysis of chromosome 4 of the plant Arabidopsis thaliana.</title>
        <authorList>
            <person name="Mayer K.F.X."/>
            <person name="Schueller C."/>
            <person name="Wambutt R."/>
            <person name="Murphy G."/>
            <person name="Volckaert G."/>
            <person name="Pohl T."/>
            <person name="Duesterhoeft A."/>
            <person name="Stiekema W."/>
            <person name="Entian K.-D."/>
            <person name="Terryn N."/>
            <person name="Harris B."/>
            <person name="Ansorge W."/>
            <person name="Brandt P."/>
            <person name="Grivell L.A."/>
            <person name="Rieger M."/>
            <person name="Weichselgartner M."/>
            <person name="de Simone V."/>
            <person name="Obermaier B."/>
            <person name="Mache R."/>
            <person name="Mueller M."/>
            <person name="Kreis M."/>
            <person name="Delseny M."/>
            <person name="Puigdomenech P."/>
            <person name="Watson M."/>
            <person name="Schmidtheini T."/>
            <person name="Reichert B."/>
            <person name="Portetelle D."/>
            <person name="Perez-Alonso M."/>
            <person name="Boutry M."/>
            <person name="Bancroft I."/>
            <person name="Vos P."/>
            <person name="Hoheisel J."/>
            <person name="Zimmermann W."/>
            <person name="Wedler H."/>
            <person name="Ridley P."/>
            <person name="Langham S.-A."/>
            <person name="McCullagh B."/>
            <person name="Bilham L."/>
            <person name="Robben J."/>
            <person name="van der Schueren J."/>
            <person name="Grymonprez B."/>
            <person name="Chuang Y.-J."/>
            <person name="Vandenbussche F."/>
            <person name="Braeken M."/>
            <person name="Weltjens I."/>
            <person name="Voet M."/>
            <person name="Bastiaens I."/>
            <person name="Aert R."/>
            <person name="Defoor E."/>
            <person name="Weitzenegger T."/>
            <person name="Bothe G."/>
            <person name="Ramsperger U."/>
            <person name="Hilbert H."/>
            <person name="Braun M."/>
            <person name="Holzer E."/>
            <person name="Brandt A."/>
            <person name="Peters S."/>
            <person name="van Staveren M."/>
            <person name="Dirkse W."/>
            <person name="Mooijman P."/>
            <person name="Klein Lankhorst R."/>
            <person name="Rose M."/>
            <person name="Hauf J."/>
            <person name="Koetter P."/>
            <person name="Berneiser S."/>
            <person name="Hempel S."/>
            <person name="Feldpausch M."/>
            <person name="Lamberth S."/>
            <person name="Van den Daele H."/>
            <person name="De Keyser A."/>
            <person name="Buysshaert C."/>
            <person name="Gielen J."/>
            <person name="Villarroel R."/>
            <person name="De Clercq R."/>
            <person name="van Montagu M."/>
            <person name="Rogers J."/>
            <person name="Cronin A."/>
            <person name="Quail M.A."/>
            <person name="Bray-Allen S."/>
            <person name="Clark L."/>
            <person name="Doggett J."/>
            <person name="Hall S."/>
            <person name="Kay M."/>
            <person name="Lennard N."/>
            <person name="McLay K."/>
            <person name="Mayes R."/>
            <person name="Pettett A."/>
            <person name="Rajandream M.A."/>
            <person name="Lyne M."/>
            <person name="Benes V."/>
            <person name="Rechmann S."/>
            <person name="Borkova D."/>
            <person name="Bloecker H."/>
            <person name="Scharfe M."/>
            <person name="Grimm M."/>
            <person name="Loehnert T.-H."/>
            <person name="Dose S."/>
            <person name="de Haan M."/>
            <person name="Maarse A.C."/>
            <person name="Schaefer M."/>
            <person name="Mueller-Auer S."/>
            <person name="Gabel C."/>
            <person name="Fuchs M."/>
            <person name="Fartmann B."/>
            <person name="Granderath K."/>
            <person name="Dauner D."/>
            <person name="Herzl A."/>
            <person name="Neumann S."/>
            <person name="Argiriou A."/>
            <person name="Vitale D."/>
            <person name="Liguori R."/>
            <person name="Piravandi E."/>
            <person name="Massenet O."/>
            <person name="Quigley F."/>
            <person name="Clabauld G."/>
            <person name="Muendlein A."/>
            <person name="Felber R."/>
            <person name="Schnabl S."/>
            <person name="Hiller R."/>
            <person name="Schmidt W."/>
            <person name="Lecharny A."/>
            <person name="Aubourg S."/>
            <person name="Chefdor F."/>
            <person name="Cooke R."/>
            <person name="Berger C."/>
            <person name="Monfort A."/>
            <person name="Casacuberta E."/>
            <person name="Gibbons T."/>
            <person name="Weber N."/>
            <person name="Vandenbol M."/>
            <person name="Bargues M."/>
            <person name="Terol J."/>
            <person name="Torres A."/>
            <person name="Perez-Perez A."/>
            <person name="Purnelle B."/>
            <person name="Bent E."/>
            <person name="Johnson S."/>
            <person name="Tacon D."/>
            <person name="Jesse T."/>
            <person name="Heijnen L."/>
            <person name="Schwarz S."/>
            <person name="Scholler P."/>
            <person name="Heber S."/>
            <person name="Francs P."/>
            <person name="Bielke C."/>
            <person name="Frishman D."/>
            <person name="Haase D."/>
            <person name="Lemcke K."/>
            <person name="Mewes H.-W."/>
            <person name="Stocker S."/>
            <person name="Zaccaria P."/>
            <person name="Bevan M."/>
            <person name="Wilson R.K."/>
            <person name="de la Bastide M."/>
            <person name="Habermann K."/>
            <person name="Parnell L."/>
            <person name="Dedhia N."/>
            <person name="Gnoj L."/>
            <person name="Schutz K."/>
            <person name="Huang E."/>
            <person name="Spiegel L."/>
            <person name="Sekhon M."/>
            <person name="Murray J."/>
            <person name="Sheet P."/>
            <person name="Cordes M."/>
            <person name="Abu-Threideh J."/>
            <person name="Stoneking T."/>
            <person name="Kalicki J."/>
            <person name="Graves T."/>
            <person name="Harmon G."/>
            <person name="Edwards J."/>
            <person name="Latreille P."/>
            <person name="Courtney L."/>
            <person name="Cloud J."/>
            <person name="Abbott A."/>
            <person name="Scott K."/>
            <person name="Johnson D."/>
            <person name="Minx P."/>
            <person name="Bentley D."/>
            <person name="Fulton B."/>
            <person name="Miller N."/>
            <person name="Greco T."/>
            <person name="Kemp K."/>
            <person name="Kramer J."/>
            <person name="Fulton L."/>
            <person name="Mardis E."/>
            <person name="Dante M."/>
            <person name="Pepin K."/>
            <person name="Hillier L.W."/>
            <person name="Nelson J."/>
            <person name="Spieth J."/>
            <person name="Ryan E."/>
            <person name="Andrews S."/>
            <person name="Geisel C."/>
            <person name="Layman D."/>
            <person name="Du H."/>
            <person name="Ali J."/>
            <person name="Berghoff A."/>
            <person name="Jones K."/>
            <person name="Drone K."/>
            <person name="Cotton M."/>
            <person name="Joshu C."/>
            <person name="Antonoiu B."/>
            <person name="Zidanic M."/>
            <person name="Strong C."/>
            <person name="Sun H."/>
            <person name="Lamar B."/>
            <person name="Yordan C."/>
            <person name="Ma P."/>
            <person name="Zhong J."/>
            <person name="Preston R."/>
            <person name="Vil D."/>
            <person name="Shekher M."/>
            <person name="Matero A."/>
            <person name="Shah R."/>
            <person name="Swaby I.K."/>
            <person name="O'Shaughnessy A."/>
            <person name="Rodriguez M."/>
            <person name="Hoffman J."/>
            <person name="Till S."/>
            <person name="Granat S."/>
            <person name="Shohdy N."/>
            <person name="Hasegawa A."/>
            <person name="Hameed A."/>
            <person name="Lodhi M."/>
            <person name="Johnson A."/>
            <person name="Chen E."/>
            <person name="Marra M.A."/>
            <person name="Martienssen R."/>
            <person name="McCombie W.R."/>
        </authorList>
    </citation>
    <scope>NUCLEOTIDE SEQUENCE [LARGE SCALE GENOMIC DNA]</scope>
    <source>
        <strain>cv. Columbia</strain>
    </source>
</reference>
<reference key="2">
    <citation type="journal article" date="2017" name="Plant J.">
        <title>Araport11: a complete reannotation of the Arabidopsis thaliana reference genome.</title>
        <authorList>
            <person name="Cheng C.Y."/>
            <person name="Krishnakumar V."/>
            <person name="Chan A.P."/>
            <person name="Thibaud-Nissen F."/>
            <person name="Schobel S."/>
            <person name="Town C.D."/>
        </authorList>
    </citation>
    <scope>GENOME REANNOTATION</scope>
    <source>
        <strain>cv. Columbia</strain>
    </source>
</reference>
<reference key="3">
    <citation type="journal article" date="2003" name="Plant Physiol.">
        <title>Members of the Arabidopsis-SKP1-like gene family exhibit a variety of expression patterns and may play diverse roles in Arabidopsis.</title>
        <authorList>
            <person name="Zhao D."/>
            <person name="Ni W."/>
            <person name="Feng B."/>
            <person name="Han T."/>
            <person name="Petrasek M.G."/>
            <person name="Ma H."/>
        </authorList>
    </citation>
    <scope>FUNCTION</scope>
    <scope>GENE FAMILY</scope>
    <scope>NOMENCLATURE</scope>
    <scope>TISSUE SPECIFICITY</scope>
</reference>
<reference key="4">
    <citation type="journal article" date="2004" name="Plant Cell Physiol.">
        <title>Expression and interaction analysis of Arabidopsis Skp1-related genes.</title>
        <authorList>
            <person name="Takahashi N."/>
            <person name="Kuroda H."/>
            <person name="Kuromori T."/>
            <person name="Hirayama T."/>
            <person name="Seki M."/>
            <person name="Shinozaki K."/>
            <person name="Shimada H."/>
            <person name="Matsui M."/>
        </authorList>
    </citation>
    <scope>TISSUE SPECIFICITY</scope>
    <scope>INTERACTION WITH EBF1/FBL6; COI1/FBL2; ADO3/FKF1; PP2B10; AT3G61590 AND AT5G49610</scope>
</reference>
<feature type="chain" id="PRO_0000375253" description="SKP1-like protein 12">
    <location>
        <begin position="1"/>
        <end position="152"/>
    </location>
</feature>
<feature type="region of interest" description="Interaction with the F-box domain of F-box proteins" evidence="1">
    <location>
        <begin position="94"/>
        <end position="152"/>
    </location>
</feature>
<dbReference type="EMBL" id="AL023094">
    <property type="protein sequence ID" value="CAA18826.1"/>
    <property type="molecule type" value="Genomic_DNA"/>
</dbReference>
<dbReference type="EMBL" id="AL161585">
    <property type="protein sequence ID" value="CAB80164.1"/>
    <property type="molecule type" value="Genomic_DNA"/>
</dbReference>
<dbReference type="EMBL" id="CP002687">
    <property type="protein sequence ID" value="AEE86383.1"/>
    <property type="molecule type" value="Genomic_DNA"/>
</dbReference>
<dbReference type="PIR" id="T05267">
    <property type="entry name" value="T05267"/>
</dbReference>
<dbReference type="RefSeq" id="NP_567967.1">
    <property type="nucleotide sequence ID" value="NM_119612.2"/>
</dbReference>
<dbReference type="SMR" id="O65674"/>
<dbReference type="BioGRID" id="14880">
    <property type="interactions" value="78"/>
</dbReference>
<dbReference type="ComplexPortal" id="CPX-1439">
    <property type="entry name" value="SCF(COI1) ubiquitin ligase complex, variant CUL1-RBX1A-ASK12"/>
</dbReference>
<dbReference type="ComplexPortal" id="CPX-1460">
    <property type="entry name" value="SCF(COI1) ubiquitin ligase complex, variant CUL1-RBX1B-ASK12"/>
</dbReference>
<dbReference type="ComplexPortal" id="CPX-1482">
    <property type="entry name" value="SCF(COI1) ubiquitin ligase complex, variant CUL2-RBX1A-ASK12"/>
</dbReference>
<dbReference type="ComplexPortal" id="CPX-1505">
    <property type="entry name" value="SCF(COI1) ubiquitin ligase complex, variant CUL2-RBX1B-ASK12"/>
</dbReference>
<dbReference type="ComplexPortal" id="CPX-1525">
    <property type="entry name" value="SCF(TIR1) ubiquitin ligase complex, variant CUL1-RBX1A-ASK12"/>
</dbReference>
<dbReference type="ComplexPortal" id="CPX-1546">
    <property type="entry name" value="SCF(TIR1) ubiquitin ligase complex, variant CUL1-RBX1B-ASK12"/>
</dbReference>
<dbReference type="ComplexPortal" id="CPX-1568">
    <property type="entry name" value="SCF(TIR1) ubiquitin ligase complex, variant CUL2-RBX1A-ASK12"/>
</dbReference>
<dbReference type="ComplexPortal" id="CPX-1589">
    <property type="entry name" value="SCF(TIR1) ubiquitin ligase complex, variant CUL2-RBX1B-ASK12"/>
</dbReference>
<dbReference type="FunCoup" id="O65674">
    <property type="interactions" value="2558"/>
</dbReference>
<dbReference type="IntAct" id="O65674">
    <property type="interactions" value="12"/>
</dbReference>
<dbReference type="STRING" id="3702.O65674"/>
<dbReference type="PaxDb" id="3702-AT4G34470.1"/>
<dbReference type="EnsemblPlants" id="AT4G34470.1">
    <property type="protein sequence ID" value="AT4G34470.1"/>
    <property type="gene ID" value="AT4G34470"/>
</dbReference>
<dbReference type="GeneID" id="829598"/>
<dbReference type="Gramene" id="AT4G34470.1">
    <property type="protein sequence ID" value="AT4G34470.1"/>
    <property type="gene ID" value="AT4G34470"/>
</dbReference>
<dbReference type="KEGG" id="ath:AT4G34470"/>
<dbReference type="Araport" id="AT4G34470"/>
<dbReference type="TAIR" id="AT4G34470">
    <property type="gene designation" value="SK12"/>
</dbReference>
<dbReference type="eggNOG" id="KOG1724">
    <property type="taxonomic scope" value="Eukaryota"/>
</dbReference>
<dbReference type="HOGENOM" id="CLU_059252_6_1_1"/>
<dbReference type="InParanoid" id="O65674"/>
<dbReference type="OMA" id="MCAADYL"/>
<dbReference type="PhylomeDB" id="O65674"/>
<dbReference type="UniPathway" id="UPA00143"/>
<dbReference type="PRO" id="PR:O65674"/>
<dbReference type="Proteomes" id="UP000006548">
    <property type="component" value="Chromosome 4"/>
</dbReference>
<dbReference type="GO" id="GO:0005634">
    <property type="term" value="C:nucleus"/>
    <property type="evidence" value="ECO:0007669"/>
    <property type="project" value="UniProtKB-SubCell"/>
</dbReference>
<dbReference type="GO" id="GO:0019005">
    <property type="term" value="C:SCF ubiquitin ligase complex"/>
    <property type="evidence" value="ECO:0000250"/>
    <property type="project" value="ComplexPortal"/>
</dbReference>
<dbReference type="GO" id="GO:0009734">
    <property type="term" value="P:auxin-activated signaling pathway"/>
    <property type="evidence" value="ECO:0000303"/>
    <property type="project" value="ComplexPortal"/>
</dbReference>
<dbReference type="GO" id="GO:0009867">
    <property type="term" value="P:jasmonic acid mediated signaling pathway"/>
    <property type="evidence" value="ECO:0000315"/>
    <property type="project" value="ComplexPortal"/>
</dbReference>
<dbReference type="GO" id="GO:0016567">
    <property type="term" value="P:protein ubiquitination"/>
    <property type="evidence" value="ECO:0007669"/>
    <property type="project" value="UniProtKB-UniPathway"/>
</dbReference>
<dbReference type="GO" id="GO:0009733">
    <property type="term" value="P:response to auxin"/>
    <property type="evidence" value="ECO:0000303"/>
    <property type="project" value="ComplexPortal"/>
</dbReference>
<dbReference type="GO" id="GO:0009753">
    <property type="term" value="P:response to jasmonic acid"/>
    <property type="evidence" value="ECO:0000315"/>
    <property type="project" value="ComplexPortal"/>
</dbReference>
<dbReference type="GO" id="GO:0006511">
    <property type="term" value="P:ubiquitin-dependent protein catabolic process"/>
    <property type="evidence" value="ECO:0000250"/>
    <property type="project" value="TAIR"/>
</dbReference>
<dbReference type="CDD" id="cd18322">
    <property type="entry name" value="BTB_POZ_SKP1"/>
    <property type="match status" value="1"/>
</dbReference>
<dbReference type="FunFam" id="3.30.710.10:FF:000230">
    <property type="entry name" value="SKP1-like protein 7"/>
    <property type="match status" value="1"/>
</dbReference>
<dbReference type="Gene3D" id="3.30.710.10">
    <property type="entry name" value="Potassium Channel Kv1.1, Chain A"/>
    <property type="match status" value="1"/>
</dbReference>
<dbReference type="InterPro" id="IPR016897">
    <property type="entry name" value="SKP1"/>
</dbReference>
<dbReference type="InterPro" id="IPR001232">
    <property type="entry name" value="SKP1-like"/>
</dbReference>
<dbReference type="InterPro" id="IPR036296">
    <property type="entry name" value="SKP1-like_dim_sf"/>
</dbReference>
<dbReference type="InterPro" id="IPR011333">
    <property type="entry name" value="SKP1/BTB/POZ_sf"/>
</dbReference>
<dbReference type="InterPro" id="IPR016072">
    <property type="entry name" value="Skp1_comp_dimer"/>
</dbReference>
<dbReference type="InterPro" id="IPR016073">
    <property type="entry name" value="Skp1_comp_POZ"/>
</dbReference>
<dbReference type="PANTHER" id="PTHR11165">
    <property type="entry name" value="SKP1"/>
    <property type="match status" value="1"/>
</dbReference>
<dbReference type="Pfam" id="PF01466">
    <property type="entry name" value="Skp1"/>
    <property type="match status" value="1"/>
</dbReference>
<dbReference type="Pfam" id="PF03931">
    <property type="entry name" value="Skp1_POZ"/>
    <property type="match status" value="1"/>
</dbReference>
<dbReference type="PIRSF" id="PIRSF028729">
    <property type="entry name" value="E3_ubiquit_lig_SCF_Skp"/>
    <property type="match status" value="1"/>
</dbReference>
<dbReference type="SMART" id="SM00512">
    <property type="entry name" value="Skp1"/>
    <property type="match status" value="1"/>
</dbReference>
<dbReference type="SUPFAM" id="SSF54695">
    <property type="entry name" value="POZ domain"/>
    <property type="match status" value="1"/>
</dbReference>
<dbReference type="SUPFAM" id="SSF81382">
    <property type="entry name" value="Skp1 dimerisation domain-like"/>
    <property type="match status" value="1"/>
</dbReference>
<comment type="function">
    <text evidence="1 2">Involved in ubiquitination and subsequent proteasomal degradation of target proteins. Together with CUL1, RBX1 and a F-box protein, it forms a SCF E3 ubiquitin ligase complex. The functional specificity of this complex depends on the type of F-box protein. In the SCF complex, it serves as an adapter that links the F-box protein to CUL1 (By similarity). Plays a role during early flowers reproductive development.</text>
</comment>
<comment type="pathway">
    <text>Protein modification; protein ubiquitination.</text>
</comment>
<comment type="subunit">
    <text evidence="1 3">Part of a SCF (SKP1-cullin-F-box) protein ligase complex (By similarity). Interacts with ADO3/FKF1, COI1/FBL2, EBF1/FBL6, PP2B10, At3g61590 and At5g49610.</text>
</comment>
<comment type="subcellular location">
    <subcellularLocation>
        <location evidence="1">Nucleus</location>
    </subcellularLocation>
</comment>
<comment type="tissue specificity">
    <text evidence="2 3">Expressed in young seedlings, roots, leaves, floral stems, inflorescences, and siliques, with a slightly higher level in inflorescence than in other tissues.</text>
</comment>
<comment type="similarity">
    <text evidence="4">Belongs to the SKP1 family.</text>
</comment>
<gene>
    <name type="primary">ASK12</name>
    <name type="ordered locus">At4g34470</name>
    <name type="ORF">T4L20.50</name>
</gene>
<evidence type="ECO:0000250" key="1"/>
<evidence type="ECO:0000269" key="2">
    <source>
    </source>
</evidence>
<evidence type="ECO:0000269" key="3">
    <source>
    </source>
</evidence>
<evidence type="ECO:0000305" key="4"/>
<sequence length="152" mass="17363">MSSKMIVLMSSDGQSFEVEEAVAIQSQTIAHMVEDDCVADGIPLANVESKILVKVIEYCKKYHVDEANPISEEDLNKWDEKFMDLEQSTIFELILAANYLNIKSLFDLTCQTVADMIKGKTPEEIRSTFNIENDFTPEEEEAVRKENQWAFE</sequence>
<keyword id="KW-0539">Nucleus</keyword>
<keyword id="KW-1185">Reference proteome</keyword>
<keyword id="KW-0833">Ubl conjugation pathway</keyword>
<name>ASK12_ARATH</name>